<organism>
    <name type="scientific">Rattus norvegicus</name>
    <name type="common">Rat</name>
    <dbReference type="NCBI Taxonomy" id="10116"/>
    <lineage>
        <taxon>Eukaryota</taxon>
        <taxon>Metazoa</taxon>
        <taxon>Chordata</taxon>
        <taxon>Craniata</taxon>
        <taxon>Vertebrata</taxon>
        <taxon>Euteleostomi</taxon>
        <taxon>Mammalia</taxon>
        <taxon>Eutheria</taxon>
        <taxon>Euarchontoglires</taxon>
        <taxon>Glires</taxon>
        <taxon>Rodentia</taxon>
        <taxon>Myomorpha</taxon>
        <taxon>Muroidea</taxon>
        <taxon>Muridae</taxon>
        <taxon>Murinae</taxon>
        <taxon>Rattus</taxon>
    </lineage>
</organism>
<name>TNR1B_RAT</name>
<reference key="1">
    <citation type="submission" date="2003-07" db="EMBL/GenBank/DDBJ databases">
        <title>Molecular cloning and cellular expression of TNFR2 in rat dorsal root ganglion.</title>
        <authorList>
            <person name="Li Y."/>
            <person name="Ji A."/>
            <person name="Schafer M.K."/>
        </authorList>
    </citation>
    <scope>NUCLEOTIDE SEQUENCE [MRNA]</scope>
    <source>
        <strain>Wistar</strain>
        <tissue>Spleen</tissue>
    </source>
</reference>
<dbReference type="EMBL" id="AF498039">
    <property type="protein sequence ID" value="AAP33151.1"/>
    <property type="molecule type" value="mRNA"/>
</dbReference>
<dbReference type="EMBL" id="AY191268">
    <property type="protein sequence ID" value="AAO61402.1"/>
    <property type="molecule type" value="mRNA"/>
</dbReference>
<dbReference type="EMBL" id="AY191269">
    <property type="protein sequence ID" value="AAO61403.1"/>
    <property type="molecule type" value="mRNA"/>
</dbReference>
<dbReference type="RefSeq" id="NP_569110.1">
    <property type="nucleotide sequence ID" value="NM_130426.4"/>
</dbReference>
<dbReference type="SMR" id="Q80WY6"/>
<dbReference type="FunCoup" id="Q80WY6">
    <property type="interactions" value="279"/>
</dbReference>
<dbReference type="IntAct" id="Q80WY6">
    <property type="interactions" value="1"/>
</dbReference>
<dbReference type="STRING" id="10116.ENSRNOP00000022478"/>
<dbReference type="GlyCosmos" id="Q80WY6">
    <property type="glycosylation" value="6 sites, No reported glycans"/>
</dbReference>
<dbReference type="GlyGen" id="Q80WY6">
    <property type="glycosylation" value="6 sites"/>
</dbReference>
<dbReference type="PhosphoSitePlus" id="Q80WY6"/>
<dbReference type="PaxDb" id="10116-ENSRNOP00000022478"/>
<dbReference type="Ensembl" id="ENSRNOT00000022478.5">
    <property type="protein sequence ID" value="ENSRNOP00000022478.3"/>
    <property type="gene ID" value="ENSRNOG00000016575.8"/>
</dbReference>
<dbReference type="GeneID" id="156767"/>
<dbReference type="KEGG" id="rno:156767"/>
<dbReference type="AGR" id="RGD:621238"/>
<dbReference type="CTD" id="7133"/>
<dbReference type="RGD" id="621238">
    <property type="gene designation" value="Tnfrsf1b"/>
</dbReference>
<dbReference type="eggNOG" id="ENOG502RZ23">
    <property type="taxonomic scope" value="Eukaryota"/>
</dbReference>
<dbReference type="GeneTree" id="ENSGT00940000161800"/>
<dbReference type="HOGENOM" id="CLU_047256_0_0_1"/>
<dbReference type="InParanoid" id="Q80WY6"/>
<dbReference type="OMA" id="CAPCEDS"/>
<dbReference type="OrthoDB" id="85561at9989"/>
<dbReference type="PhylomeDB" id="Q80WY6"/>
<dbReference type="TreeFam" id="TF331157"/>
<dbReference type="Reactome" id="R-RNO-5668541">
    <property type="pathway name" value="TNFR2 non-canonical NF-kB pathway"/>
</dbReference>
<dbReference type="Reactome" id="R-RNO-5669034">
    <property type="pathway name" value="TNFs bind their physiological receptors"/>
</dbReference>
<dbReference type="Reactome" id="R-RNO-6798695">
    <property type="pathway name" value="Neutrophil degranulation"/>
</dbReference>
<dbReference type="PRO" id="PR:Q80WY6"/>
<dbReference type="Proteomes" id="UP000002494">
    <property type="component" value="Chromosome 5"/>
</dbReference>
<dbReference type="Bgee" id="ENSRNOG00000016575">
    <property type="expression patterns" value="Expressed in spleen and 18 other cell types or tissues"/>
</dbReference>
<dbReference type="GO" id="GO:0030424">
    <property type="term" value="C:axon"/>
    <property type="evidence" value="ECO:0000314"/>
    <property type="project" value="RGD"/>
</dbReference>
<dbReference type="GO" id="GO:0016020">
    <property type="term" value="C:membrane"/>
    <property type="evidence" value="ECO:0000266"/>
    <property type="project" value="RGD"/>
</dbReference>
<dbReference type="GO" id="GO:0045121">
    <property type="term" value="C:membrane raft"/>
    <property type="evidence" value="ECO:0000266"/>
    <property type="project" value="RGD"/>
</dbReference>
<dbReference type="GO" id="GO:0043025">
    <property type="term" value="C:neuronal cell body"/>
    <property type="evidence" value="ECO:0000314"/>
    <property type="project" value="RGD"/>
</dbReference>
<dbReference type="GO" id="GO:0048471">
    <property type="term" value="C:perinuclear region of cytoplasm"/>
    <property type="evidence" value="ECO:0000314"/>
    <property type="project" value="RGD"/>
</dbReference>
<dbReference type="GO" id="GO:0043196">
    <property type="term" value="C:varicosity"/>
    <property type="evidence" value="ECO:0000314"/>
    <property type="project" value="RGD"/>
</dbReference>
<dbReference type="GO" id="GO:0043120">
    <property type="term" value="F:tumor necrosis factor binding"/>
    <property type="evidence" value="ECO:0000266"/>
    <property type="project" value="RGD"/>
</dbReference>
<dbReference type="GO" id="GO:0005031">
    <property type="term" value="F:tumor necrosis factor receptor activity"/>
    <property type="evidence" value="ECO:0000314"/>
    <property type="project" value="RGD"/>
</dbReference>
<dbReference type="GO" id="GO:0031625">
    <property type="term" value="F:ubiquitin protein ligase binding"/>
    <property type="evidence" value="ECO:0000266"/>
    <property type="project" value="RGD"/>
</dbReference>
<dbReference type="GO" id="GO:0003176">
    <property type="term" value="P:aortic valve development"/>
    <property type="evidence" value="ECO:0000266"/>
    <property type="project" value="RGD"/>
</dbReference>
<dbReference type="GO" id="GO:0007166">
    <property type="term" value="P:cell surface receptor signaling pathway"/>
    <property type="evidence" value="ECO:0000266"/>
    <property type="project" value="RGD"/>
</dbReference>
<dbReference type="GO" id="GO:0071363">
    <property type="term" value="P:cellular response to growth factor stimulus"/>
    <property type="evidence" value="ECO:0000270"/>
    <property type="project" value="RGD"/>
</dbReference>
<dbReference type="GO" id="GO:0071222">
    <property type="term" value="P:cellular response to lipopolysaccharide"/>
    <property type="evidence" value="ECO:0000266"/>
    <property type="project" value="RGD"/>
</dbReference>
<dbReference type="GO" id="GO:0071356">
    <property type="term" value="P:cellular response to tumor necrosis factor"/>
    <property type="evidence" value="ECO:0000270"/>
    <property type="project" value="RGD"/>
</dbReference>
<dbReference type="GO" id="GO:0097191">
    <property type="term" value="P:extrinsic apoptotic signaling pathway"/>
    <property type="evidence" value="ECO:0000266"/>
    <property type="project" value="RGD"/>
</dbReference>
<dbReference type="GO" id="GO:0150098">
    <property type="term" value="P:glial cell-neuron signaling"/>
    <property type="evidence" value="ECO:0000266"/>
    <property type="project" value="RGD"/>
</dbReference>
<dbReference type="GO" id="GO:0006955">
    <property type="term" value="P:immune response"/>
    <property type="evidence" value="ECO:0000314"/>
    <property type="project" value="RGD"/>
</dbReference>
<dbReference type="GO" id="GO:0006954">
    <property type="term" value="P:inflammatory response"/>
    <property type="evidence" value="ECO:0000266"/>
    <property type="project" value="RGD"/>
</dbReference>
<dbReference type="GO" id="GO:0008630">
    <property type="term" value="P:intrinsic apoptotic signaling pathway in response to DNA damage"/>
    <property type="evidence" value="ECO:0000266"/>
    <property type="project" value="RGD"/>
</dbReference>
<dbReference type="GO" id="GO:0010614">
    <property type="term" value="P:negative regulation of cardiac muscle hypertrophy"/>
    <property type="evidence" value="ECO:0000266"/>
    <property type="project" value="RGD"/>
</dbReference>
<dbReference type="GO" id="GO:0003332">
    <property type="term" value="P:negative regulation of extracellular matrix constituent secretion"/>
    <property type="evidence" value="ECO:0000266"/>
    <property type="project" value="RGD"/>
</dbReference>
<dbReference type="GO" id="GO:0050728">
    <property type="term" value="P:negative regulation of inflammatory response"/>
    <property type="evidence" value="ECO:0000266"/>
    <property type="project" value="RGD"/>
</dbReference>
<dbReference type="GO" id="GO:0150079">
    <property type="term" value="P:negative regulation of neuroinflammatory response"/>
    <property type="evidence" value="ECO:0000266"/>
    <property type="project" value="RGD"/>
</dbReference>
<dbReference type="GO" id="GO:1902339">
    <property type="term" value="P:positive regulation of apoptotic process involved in morphogenesis"/>
    <property type="evidence" value="ECO:0000266"/>
    <property type="project" value="RGD"/>
</dbReference>
<dbReference type="GO" id="GO:0051044">
    <property type="term" value="P:positive regulation of membrane protein ectodomain proteolysis"/>
    <property type="evidence" value="ECO:0000266"/>
    <property type="project" value="RGD"/>
</dbReference>
<dbReference type="GO" id="GO:0031643">
    <property type="term" value="P:positive regulation of myelination"/>
    <property type="evidence" value="ECO:0000266"/>
    <property type="project" value="RGD"/>
</dbReference>
<dbReference type="GO" id="GO:0048714">
    <property type="term" value="P:positive regulation of oligodendrocyte differentiation"/>
    <property type="evidence" value="ECO:0000266"/>
    <property type="project" value="RGD"/>
</dbReference>
<dbReference type="GO" id="GO:0003177">
    <property type="term" value="P:pulmonary valve development"/>
    <property type="evidence" value="ECO:0000266"/>
    <property type="project" value="RGD"/>
</dbReference>
<dbReference type="GO" id="GO:0002718">
    <property type="term" value="P:regulation of cytokine production involved in immune response"/>
    <property type="evidence" value="ECO:0000266"/>
    <property type="project" value="RGD"/>
</dbReference>
<dbReference type="GO" id="GO:0031641">
    <property type="term" value="P:regulation of myelination"/>
    <property type="evidence" value="ECO:0000266"/>
    <property type="project" value="RGD"/>
</dbReference>
<dbReference type="GO" id="GO:0150077">
    <property type="term" value="P:regulation of neuroinflammatory response"/>
    <property type="evidence" value="ECO:0000266"/>
    <property type="project" value="RGD"/>
</dbReference>
<dbReference type="GO" id="GO:0002724">
    <property type="term" value="P:regulation of T cell cytokine production"/>
    <property type="evidence" value="ECO:0000266"/>
    <property type="project" value="RGD"/>
</dbReference>
<dbReference type="GO" id="GO:0042129">
    <property type="term" value="P:regulation of T cell proliferation"/>
    <property type="evidence" value="ECO:0000266"/>
    <property type="project" value="RGD"/>
</dbReference>
<dbReference type="GO" id="GO:0032496">
    <property type="term" value="P:response to lipopolysaccharide"/>
    <property type="evidence" value="ECO:0000270"/>
    <property type="project" value="RGD"/>
</dbReference>
<dbReference type="GO" id="GO:0050779">
    <property type="term" value="P:RNA destabilization"/>
    <property type="evidence" value="ECO:0000266"/>
    <property type="project" value="RGD"/>
</dbReference>
<dbReference type="CDD" id="cd10577">
    <property type="entry name" value="TNFRSF1B"/>
    <property type="match status" value="1"/>
</dbReference>
<dbReference type="FunFam" id="2.10.50.10:FF:000031">
    <property type="entry name" value="Tumor necrosis factor receptor superfamily member 1B"/>
    <property type="match status" value="1"/>
</dbReference>
<dbReference type="FunFam" id="2.10.50.10:FF:000036">
    <property type="entry name" value="Tumor necrosis factor receptor superfamily member 1B"/>
    <property type="match status" value="1"/>
</dbReference>
<dbReference type="Gene3D" id="2.10.50.10">
    <property type="entry name" value="Tumor Necrosis Factor Receptor, subunit A, domain 2"/>
    <property type="match status" value="2"/>
</dbReference>
<dbReference type="InterPro" id="IPR051670">
    <property type="entry name" value="TNF_chemokine_rcpt-like"/>
</dbReference>
<dbReference type="InterPro" id="IPR001368">
    <property type="entry name" value="TNFR/NGFR_Cys_rich_reg"/>
</dbReference>
<dbReference type="InterPro" id="IPR020411">
    <property type="entry name" value="TNFR_1B"/>
</dbReference>
<dbReference type="InterPro" id="IPR033996">
    <property type="entry name" value="TNFRSF1B_N"/>
</dbReference>
<dbReference type="PANTHER" id="PTHR47386">
    <property type="entry name" value="TUMOR NECROSIS FACTOR RECEPTOR SUPERFAMILY MEMBER 1B"/>
    <property type="match status" value="1"/>
</dbReference>
<dbReference type="PANTHER" id="PTHR47386:SF1">
    <property type="entry name" value="TUMOR NECROSIS FACTOR RECEPTOR SUPERFAMILY MEMBER 1B"/>
    <property type="match status" value="1"/>
</dbReference>
<dbReference type="Pfam" id="PF00020">
    <property type="entry name" value="TNFR_c6"/>
    <property type="match status" value="2"/>
</dbReference>
<dbReference type="PRINTS" id="PR01919">
    <property type="entry name" value="TNFACTORR1B"/>
</dbReference>
<dbReference type="SMART" id="SM00208">
    <property type="entry name" value="TNFR"/>
    <property type="match status" value="4"/>
</dbReference>
<dbReference type="SUPFAM" id="SSF57586">
    <property type="entry name" value="TNF receptor-like"/>
    <property type="match status" value="2"/>
</dbReference>
<dbReference type="PROSITE" id="PS00652">
    <property type="entry name" value="TNFR_NGFR_1"/>
    <property type="match status" value="2"/>
</dbReference>
<dbReference type="PROSITE" id="PS50050">
    <property type="entry name" value="TNFR_NGFR_2"/>
    <property type="match status" value="3"/>
</dbReference>
<accession>Q80WY6</accession>
<accession>Q5YLP0</accession>
<sequence length="474" mass="50148">MAPAALWVALVVELQLWATGHTVPAKVVLTPYKPEPGNQCQISQEYYDKKAQMCCAKCPPGQYAKHFCNKTSDTVCADCAAGMFTQVWNHLHTCLSCSSSCSDDQVETHNCTKKQNRVCACNADSYCALKLHSGNCRQCMKLSKCGPGFGVARSRTSNGNVICSACAPGTFSDTTSSTDVCRPHRICSILAIPGNASTDAVCASESPTPSAVPRTIYVSQPEPTRSQPMDQEPGPSQTPHIPVSLGSTPIIEPSITGGISLPIGLIVGLTTLGLLMLGLANCFILVQRKKKPSCLQRETMVPHLPDDKSQDAIGLEQQHLLTTAPSSSSSSLESSASAGDRRAPPGGHPQARVTAEAQGSQEACAGSRSSDSSHGSHGTHVNVTCIVNVCSSSDHSSQCSSQASTTVGDPDANPSGSPKDEQVPFSQEECPSQSQWETTETLQNHDKPFPLGVPDVGMKPNQPGWYDQIAVKVP</sequence>
<protein>
    <recommendedName>
        <fullName>Tumor necrosis factor receptor superfamily member 1B</fullName>
    </recommendedName>
    <alternativeName>
        <fullName>Tumor necrosis factor receptor 2</fullName>
        <shortName>TNF-R2</shortName>
    </alternativeName>
    <alternativeName>
        <fullName>Tumor necrosis factor receptor type II</fullName>
        <shortName>TNF-RII</shortName>
        <shortName>TNFR-II</shortName>
    </alternativeName>
    <alternativeName>
        <fullName>p75</fullName>
    </alternativeName>
    <alternativeName>
        <fullName>p80 TNF-alpha receptor</fullName>
    </alternativeName>
    <cdAntigenName>CD120b</cdAntigenName>
</protein>
<evidence type="ECO:0000250" key="1"/>
<evidence type="ECO:0000250" key="2">
    <source>
        <dbReference type="UniProtKB" id="P20333"/>
    </source>
</evidence>
<evidence type="ECO:0000255" key="3"/>
<evidence type="ECO:0000255" key="4">
    <source>
        <dbReference type="PROSITE-ProRule" id="PRU00206"/>
    </source>
</evidence>
<evidence type="ECO:0000256" key="5">
    <source>
        <dbReference type="SAM" id="MobiDB-lite"/>
    </source>
</evidence>
<feature type="signal peptide" evidence="1">
    <location>
        <begin position="1"/>
        <end position="22"/>
    </location>
</feature>
<feature type="chain" id="PRO_0000034551" description="Tumor necrosis factor receptor superfamily member 1B">
    <location>
        <begin position="23"/>
        <end position="474"/>
    </location>
</feature>
<feature type="topological domain" description="Extracellular" evidence="3">
    <location>
        <begin position="23"/>
        <end position="258"/>
    </location>
</feature>
<feature type="transmembrane region" description="Helical" evidence="3">
    <location>
        <begin position="259"/>
        <end position="288"/>
    </location>
</feature>
<feature type="topological domain" description="Cytoplasmic" evidence="3">
    <location>
        <begin position="289"/>
        <end position="474"/>
    </location>
</feature>
<feature type="repeat" description="TNFR-Cys 1">
    <location>
        <begin position="39"/>
        <end position="77"/>
    </location>
</feature>
<feature type="repeat" description="TNFR-Cys 2">
    <location>
        <begin position="78"/>
        <end position="119"/>
    </location>
</feature>
<feature type="repeat" description="TNFR-Cys 3">
    <location>
        <begin position="120"/>
        <end position="164"/>
    </location>
</feature>
<feature type="repeat" description="TNFR-Cys 4">
    <location>
        <begin position="165"/>
        <end position="203"/>
    </location>
</feature>
<feature type="region of interest" description="Disordered" evidence="5">
    <location>
        <begin position="220"/>
        <end position="241"/>
    </location>
</feature>
<feature type="region of interest" description="Disordered" evidence="5">
    <location>
        <begin position="321"/>
        <end position="378"/>
    </location>
</feature>
<feature type="region of interest" description="Disordered" evidence="5">
    <location>
        <begin position="397"/>
        <end position="464"/>
    </location>
</feature>
<feature type="compositionally biased region" description="Polar residues" evidence="5">
    <location>
        <begin position="220"/>
        <end position="239"/>
    </location>
</feature>
<feature type="compositionally biased region" description="Low complexity" evidence="5">
    <location>
        <begin position="324"/>
        <end position="338"/>
    </location>
</feature>
<feature type="compositionally biased region" description="Low complexity" evidence="5">
    <location>
        <begin position="366"/>
        <end position="378"/>
    </location>
</feature>
<feature type="compositionally biased region" description="Polar residues" evidence="5">
    <location>
        <begin position="429"/>
        <end position="442"/>
    </location>
</feature>
<feature type="modified residue" description="Phosphoserine" evidence="2">
    <location>
        <position position="331"/>
    </location>
</feature>
<feature type="glycosylation site" description="O-linked (GalNAc...) threonine" evidence="2">
    <location>
        <position position="30"/>
    </location>
</feature>
<feature type="glycosylation site" description="N-linked (GlcNAc...) asparagine" evidence="3">
    <location>
        <position position="69"/>
    </location>
</feature>
<feature type="glycosylation site" description="N-linked (GlcNAc...) asparagine" evidence="3">
    <location>
        <position position="110"/>
    </location>
</feature>
<feature type="glycosylation site" description="N-linked (GlcNAc...) asparagine" evidence="3">
    <location>
        <position position="195"/>
    </location>
</feature>
<feature type="glycosylation site" description="O-linked (GalNAc...) threonine" evidence="2">
    <location>
        <position position="208"/>
    </location>
</feature>
<feature type="glycosylation site" description="O-linked (GalNAc...) threonine" evidence="2">
    <location>
        <position position="224"/>
    </location>
</feature>
<feature type="disulfide bond" evidence="4">
    <location>
        <begin position="40"/>
        <end position="54"/>
    </location>
</feature>
<feature type="disulfide bond" evidence="4">
    <location>
        <begin position="55"/>
        <end position="68"/>
    </location>
</feature>
<feature type="disulfide bond" evidence="4">
    <location>
        <begin position="58"/>
        <end position="76"/>
    </location>
</feature>
<feature type="disulfide bond" evidence="4">
    <location>
        <begin position="79"/>
        <end position="94"/>
    </location>
</feature>
<feature type="disulfide bond" evidence="4">
    <location>
        <begin position="97"/>
        <end position="111"/>
    </location>
</feature>
<feature type="disulfide bond" evidence="4">
    <location>
        <begin position="101"/>
        <end position="119"/>
    </location>
</feature>
<feature type="disulfide bond" evidence="4">
    <location>
        <begin position="121"/>
        <end position="127"/>
    </location>
</feature>
<feature type="disulfide bond" evidence="4">
    <location>
        <begin position="136"/>
        <end position="145"/>
    </location>
</feature>
<feature type="disulfide bond" evidence="4">
    <location>
        <begin position="139"/>
        <end position="163"/>
    </location>
</feature>
<feature type="disulfide bond" evidence="4">
    <location>
        <begin position="166"/>
        <end position="181"/>
    </location>
</feature>
<keyword id="KW-1015">Disulfide bond</keyword>
<keyword id="KW-0325">Glycoprotein</keyword>
<keyword id="KW-0472">Membrane</keyword>
<keyword id="KW-0597">Phosphoprotein</keyword>
<keyword id="KW-0675">Receptor</keyword>
<keyword id="KW-1185">Reference proteome</keyword>
<keyword id="KW-0677">Repeat</keyword>
<keyword id="KW-0732">Signal</keyword>
<keyword id="KW-0812">Transmembrane</keyword>
<keyword id="KW-1133">Transmembrane helix</keyword>
<gene>
    <name type="primary">Tnfrsf1b</name>
    <name type="synonym">Tnfr2</name>
</gene>
<proteinExistence type="evidence at transcript level"/>
<comment type="function">
    <text evidence="1">Receptor with high affinity for TNFSF2/TNF-alpha and approximately 5-fold lower affinity for homotrimeric TNFSF1/lymphotoxin-alpha. The TRAF1/TRAF2 complex recruits the apoptotic suppressors BIRC2 and BIRC3 to TNFRSF1B/TNFR2 (By similarity).</text>
</comment>
<comment type="subunit">
    <text evidence="2">Binds to TRAF2. Interacts with BMX. Interacts (activated form) with XPNPEP3.</text>
</comment>
<comment type="subcellular location">
    <subcellularLocation>
        <location evidence="1">Membrane</location>
        <topology evidence="1">Single-pass type I membrane protein</topology>
    </subcellularLocation>
</comment>